<dbReference type="EC" id="6.1.1.7" evidence="1"/>
<dbReference type="EMBL" id="AM180355">
    <property type="protein sequence ID" value="CAJ68138.1"/>
    <property type="molecule type" value="Genomic_DNA"/>
</dbReference>
<dbReference type="RefSeq" id="WP_009889064.1">
    <property type="nucleotide sequence ID" value="NZ_JAUPES010000027.1"/>
</dbReference>
<dbReference type="RefSeq" id="YP_001087776.1">
    <property type="nucleotide sequence ID" value="NC_009089.1"/>
</dbReference>
<dbReference type="SMR" id="Q18BE7"/>
<dbReference type="STRING" id="272563.CD630_12820"/>
<dbReference type="EnsemblBacteria" id="CAJ68138">
    <property type="protein sequence ID" value="CAJ68138"/>
    <property type="gene ID" value="CD630_12820"/>
</dbReference>
<dbReference type="GeneID" id="66353683"/>
<dbReference type="KEGG" id="cdf:CD630_12820"/>
<dbReference type="KEGG" id="pdc:CDIF630_01436"/>
<dbReference type="PATRIC" id="fig|272563.120.peg.1340"/>
<dbReference type="eggNOG" id="COG0013">
    <property type="taxonomic scope" value="Bacteria"/>
</dbReference>
<dbReference type="OrthoDB" id="9803884at2"/>
<dbReference type="PhylomeDB" id="Q18BE7"/>
<dbReference type="BioCyc" id="PDIF272563:G12WB-1416-MONOMER"/>
<dbReference type="Proteomes" id="UP000001978">
    <property type="component" value="Chromosome"/>
</dbReference>
<dbReference type="GO" id="GO:0005829">
    <property type="term" value="C:cytosol"/>
    <property type="evidence" value="ECO:0007669"/>
    <property type="project" value="TreeGrafter"/>
</dbReference>
<dbReference type="GO" id="GO:0004813">
    <property type="term" value="F:alanine-tRNA ligase activity"/>
    <property type="evidence" value="ECO:0007669"/>
    <property type="project" value="UniProtKB-UniRule"/>
</dbReference>
<dbReference type="GO" id="GO:0002161">
    <property type="term" value="F:aminoacyl-tRNA deacylase activity"/>
    <property type="evidence" value="ECO:0007669"/>
    <property type="project" value="TreeGrafter"/>
</dbReference>
<dbReference type="GO" id="GO:0005524">
    <property type="term" value="F:ATP binding"/>
    <property type="evidence" value="ECO:0007669"/>
    <property type="project" value="UniProtKB-UniRule"/>
</dbReference>
<dbReference type="GO" id="GO:0140096">
    <property type="term" value="F:catalytic activity, acting on a protein"/>
    <property type="evidence" value="ECO:0007669"/>
    <property type="project" value="UniProtKB-ARBA"/>
</dbReference>
<dbReference type="GO" id="GO:0016740">
    <property type="term" value="F:transferase activity"/>
    <property type="evidence" value="ECO:0007669"/>
    <property type="project" value="UniProtKB-ARBA"/>
</dbReference>
<dbReference type="GO" id="GO:0000049">
    <property type="term" value="F:tRNA binding"/>
    <property type="evidence" value="ECO:0007669"/>
    <property type="project" value="UniProtKB-KW"/>
</dbReference>
<dbReference type="GO" id="GO:0008270">
    <property type="term" value="F:zinc ion binding"/>
    <property type="evidence" value="ECO:0007669"/>
    <property type="project" value="UniProtKB-UniRule"/>
</dbReference>
<dbReference type="GO" id="GO:0006419">
    <property type="term" value="P:alanyl-tRNA aminoacylation"/>
    <property type="evidence" value="ECO:0007669"/>
    <property type="project" value="UniProtKB-UniRule"/>
</dbReference>
<dbReference type="CDD" id="cd00673">
    <property type="entry name" value="AlaRS_core"/>
    <property type="match status" value="1"/>
</dbReference>
<dbReference type="FunFam" id="3.10.310.40:FF:000001">
    <property type="entry name" value="Alanine--tRNA ligase"/>
    <property type="match status" value="1"/>
</dbReference>
<dbReference type="FunFam" id="3.30.54.20:FF:000001">
    <property type="entry name" value="Alanine--tRNA ligase"/>
    <property type="match status" value="1"/>
</dbReference>
<dbReference type="FunFam" id="3.30.930.10:FF:000004">
    <property type="entry name" value="Alanine--tRNA ligase"/>
    <property type="match status" value="1"/>
</dbReference>
<dbReference type="FunFam" id="3.30.980.10:FF:000004">
    <property type="entry name" value="Alanine--tRNA ligase, cytoplasmic"/>
    <property type="match status" value="1"/>
</dbReference>
<dbReference type="Gene3D" id="2.40.30.130">
    <property type="match status" value="1"/>
</dbReference>
<dbReference type="Gene3D" id="3.10.310.40">
    <property type="match status" value="1"/>
</dbReference>
<dbReference type="Gene3D" id="3.30.54.20">
    <property type="match status" value="1"/>
</dbReference>
<dbReference type="Gene3D" id="6.10.250.550">
    <property type="match status" value="1"/>
</dbReference>
<dbReference type="Gene3D" id="3.30.930.10">
    <property type="entry name" value="Bira Bifunctional Protein, Domain 2"/>
    <property type="match status" value="1"/>
</dbReference>
<dbReference type="Gene3D" id="3.30.980.10">
    <property type="entry name" value="Threonyl-trna Synthetase, Chain A, domain 2"/>
    <property type="match status" value="1"/>
</dbReference>
<dbReference type="HAMAP" id="MF_00036_B">
    <property type="entry name" value="Ala_tRNA_synth_B"/>
    <property type="match status" value="1"/>
</dbReference>
<dbReference type="InterPro" id="IPR045864">
    <property type="entry name" value="aa-tRNA-synth_II/BPL/LPL"/>
</dbReference>
<dbReference type="InterPro" id="IPR002318">
    <property type="entry name" value="Ala-tRNA-lgiase_IIc"/>
</dbReference>
<dbReference type="InterPro" id="IPR018162">
    <property type="entry name" value="Ala-tRNA-ligase_IIc_anticod-bd"/>
</dbReference>
<dbReference type="InterPro" id="IPR018165">
    <property type="entry name" value="Ala-tRNA-synth_IIc_core"/>
</dbReference>
<dbReference type="InterPro" id="IPR018164">
    <property type="entry name" value="Ala-tRNA-synth_IIc_N"/>
</dbReference>
<dbReference type="InterPro" id="IPR050058">
    <property type="entry name" value="Ala-tRNA_ligase"/>
</dbReference>
<dbReference type="InterPro" id="IPR023033">
    <property type="entry name" value="Ala_tRNA_ligase_euk/bac"/>
</dbReference>
<dbReference type="InterPro" id="IPR003156">
    <property type="entry name" value="DHHA1_dom"/>
</dbReference>
<dbReference type="InterPro" id="IPR018163">
    <property type="entry name" value="Thr/Ala-tRNA-synth_IIc_edit"/>
</dbReference>
<dbReference type="InterPro" id="IPR009000">
    <property type="entry name" value="Transl_B-barrel_sf"/>
</dbReference>
<dbReference type="InterPro" id="IPR012947">
    <property type="entry name" value="tRNA_SAD"/>
</dbReference>
<dbReference type="NCBIfam" id="TIGR00344">
    <property type="entry name" value="alaS"/>
    <property type="match status" value="1"/>
</dbReference>
<dbReference type="PANTHER" id="PTHR11777:SF9">
    <property type="entry name" value="ALANINE--TRNA LIGASE, CYTOPLASMIC"/>
    <property type="match status" value="1"/>
</dbReference>
<dbReference type="PANTHER" id="PTHR11777">
    <property type="entry name" value="ALANYL-TRNA SYNTHETASE"/>
    <property type="match status" value="1"/>
</dbReference>
<dbReference type="Pfam" id="PF02272">
    <property type="entry name" value="DHHA1"/>
    <property type="match status" value="1"/>
</dbReference>
<dbReference type="Pfam" id="PF01411">
    <property type="entry name" value="tRNA-synt_2c"/>
    <property type="match status" value="1"/>
</dbReference>
<dbReference type="Pfam" id="PF07973">
    <property type="entry name" value="tRNA_SAD"/>
    <property type="match status" value="1"/>
</dbReference>
<dbReference type="PRINTS" id="PR00980">
    <property type="entry name" value="TRNASYNTHALA"/>
</dbReference>
<dbReference type="SMART" id="SM00863">
    <property type="entry name" value="tRNA_SAD"/>
    <property type="match status" value="1"/>
</dbReference>
<dbReference type="SUPFAM" id="SSF55681">
    <property type="entry name" value="Class II aaRS and biotin synthetases"/>
    <property type="match status" value="1"/>
</dbReference>
<dbReference type="SUPFAM" id="SSF101353">
    <property type="entry name" value="Putative anticodon-binding domain of alanyl-tRNA synthetase (AlaRS)"/>
    <property type="match status" value="1"/>
</dbReference>
<dbReference type="SUPFAM" id="SSF55186">
    <property type="entry name" value="ThrRS/AlaRS common domain"/>
    <property type="match status" value="1"/>
</dbReference>
<dbReference type="SUPFAM" id="SSF50447">
    <property type="entry name" value="Translation proteins"/>
    <property type="match status" value="1"/>
</dbReference>
<dbReference type="PROSITE" id="PS50860">
    <property type="entry name" value="AA_TRNA_LIGASE_II_ALA"/>
    <property type="match status" value="1"/>
</dbReference>
<protein>
    <recommendedName>
        <fullName evidence="1">Alanine--tRNA ligase</fullName>
        <ecNumber evidence="1">6.1.1.7</ecNumber>
    </recommendedName>
    <alternativeName>
        <fullName evidence="1">Alanyl-tRNA synthetase</fullName>
        <shortName evidence="1">AlaRS</shortName>
    </alternativeName>
</protein>
<accession>Q18BE7</accession>
<feature type="chain" id="PRO_0000347566" description="Alanine--tRNA ligase">
    <location>
        <begin position="1"/>
        <end position="879"/>
    </location>
</feature>
<feature type="region of interest" description="Disordered" evidence="2">
    <location>
        <begin position="426"/>
        <end position="449"/>
    </location>
</feature>
<feature type="binding site" evidence="1">
    <location>
        <position position="566"/>
    </location>
    <ligand>
        <name>Zn(2+)</name>
        <dbReference type="ChEBI" id="CHEBI:29105"/>
    </ligand>
</feature>
<feature type="binding site" evidence="1">
    <location>
        <position position="570"/>
    </location>
    <ligand>
        <name>Zn(2+)</name>
        <dbReference type="ChEBI" id="CHEBI:29105"/>
    </ligand>
</feature>
<feature type="binding site" evidence="1">
    <location>
        <position position="668"/>
    </location>
    <ligand>
        <name>Zn(2+)</name>
        <dbReference type="ChEBI" id="CHEBI:29105"/>
    </ligand>
</feature>
<feature type="binding site" evidence="1">
    <location>
        <position position="672"/>
    </location>
    <ligand>
        <name>Zn(2+)</name>
        <dbReference type="ChEBI" id="CHEBI:29105"/>
    </ligand>
</feature>
<keyword id="KW-0030">Aminoacyl-tRNA synthetase</keyword>
<keyword id="KW-0067">ATP-binding</keyword>
<keyword id="KW-0963">Cytoplasm</keyword>
<keyword id="KW-0436">Ligase</keyword>
<keyword id="KW-0479">Metal-binding</keyword>
<keyword id="KW-0547">Nucleotide-binding</keyword>
<keyword id="KW-0648">Protein biosynthesis</keyword>
<keyword id="KW-1185">Reference proteome</keyword>
<keyword id="KW-0694">RNA-binding</keyword>
<keyword id="KW-0820">tRNA-binding</keyword>
<keyword id="KW-0862">Zinc</keyword>
<sequence>MEKMGLNEIRSKFLEFFESKGHYVANSYSLVPNNDKSLLLINSGMAPLKNYFSGVEVPPSVRMCTSQKCIRTGDIENVGITARHATFFEMMGNFSFGDYFKRESIKWGWEFVTEWLNIPEDKIWVTVYEEDDDSYDIWAKEMNFPEERMVRLGKDDNFWEIGTGPCGPCSEIYFDRGEEYGCDNPDCKPGCDCDRYLEFWNHVFTQFDRDEEGNYSLLENKNIDTGMGLERMGCIMQGVDTIFEVDTIKSILEAVEKLTGVKYGENPKNDISIRIITDHIRAVTFLVSDGVLPSNEGRGYVLRRLLRRAARHGKLLGVKELFLQKLIDEVIKVNDKAYPVLVEKESYIKKVVGIEEEKFNETIDQGTEILNSYIEVLKNEGKTVLSGQEAFKLYDTYGFPIDLTKEILEEEHLSVDEEAFNEEMEKQKERARNARGNMDGESWKEDPLSKLESTVDSTFNGYSEIYGEGTIEAIVKDDELVQSAEEGDKVSIVLDNTTFYPEGGGQVGDCGLITNENLVLEVLNTKKGANNSIKHIGIIKSGRISNGDKVKTLVDRETRMSAARNHSATHLLHKALREVLGEHVNQAGSLVTPERLRFDITHFEAISNEELKVIEEKVNNVILSSLDIKCDIMNIKEAKEKGATALFGEKYGDEVRVVSMGDYSTELCGGTHLTNTSQVGMFKILSEGGVAAGVRRIEAITGKAVYEYLKERDGIISEVCVNLKSKEDNLIQRISSLLEENKNLSKELHDMKAKMSLQSVDSIFDSKVEVNGVNLITNKFEGMDMDTLRETADNLRDKLGSGVVVLANVVDDKVNFVVTATKDVLDKGIHSGNIVREVAKIAGGKGGGRPNMAQAGASDVSKVDQALSYASEVIKTQVK</sequence>
<name>SYA_CLOD6</name>
<gene>
    <name evidence="1" type="primary">alaS</name>
    <name type="ordered locus">CD630_12820</name>
</gene>
<proteinExistence type="inferred from homology"/>
<evidence type="ECO:0000255" key="1">
    <source>
        <dbReference type="HAMAP-Rule" id="MF_00036"/>
    </source>
</evidence>
<evidence type="ECO:0000256" key="2">
    <source>
        <dbReference type="SAM" id="MobiDB-lite"/>
    </source>
</evidence>
<organism>
    <name type="scientific">Clostridioides difficile (strain 630)</name>
    <name type="common">Peptoclostridium difficile</name>
    <dbReference type="NCBI Taxonomy" id="272563"/>
    <lineage>
        <taxon>Bacteria</taxon>
        <taxon>Bacillati</taxon>
        <taxon>Bacillota</taxon>
        <taxon>Clostridia</taxon>
        <taxon>Peptostreptococcales</taxon>
        <taxon>Peptostreptococcaceae</taxon>
        <taxon>Clostridioides</taxon>
    </lineage>
</organism>
<reference key="1">
    <citation type="journal article" date="2006" name="Nat. Genet.">
        <title>The multidrug-resistant human pathogen Clostridium difficile has a highly mobile, mosaic genome.</title>
        <authorList>
            <person name="Sebaihia M."/>
            <person name="Wren B.W."/>
            <person name="Mullany P."/>
            <person name="Fairweather N.F."/>
            <person name="Minton N."/>
            <person name="Stabler R."/>
            <person name="Thomson N.R."/>
            <person name="Roberts A.P."/>
            <person name="Cerdeno-Tarraga A.M."/>
            <person name="Wang H."/>
            <person name="Holden M.T.G."/>
            <person name="Wright A."/>
            <person name="Churcher C."/>
            <person name="Quail M.A."/>
            <person name="Baker S."/>
            <person name="Bason N."/>
            <person name="Brooks K."/>
            <person name="Chillingworth T."/>
            <person name="Cronin A."/>
            <person name="Davis P."/>
            <person name="Dowd L."/>
            <person name="Fraser A."/>
            <person name="Feltwell T."/>
            <person name="Hance Z."/>
            <person name="Holroyd S."/>
            <person name="Jagels K."/>
            <person name="Moule S."/>
            <person name="Mungall K."/>
            <person name="Price C."/>
            <person name="Rabbinowitsch E."/>
            <person name="Sharp S."/>
            <person name="Simmonds M."/>
            <person name="Stevens K."/>
            <person name="Unwin L."/>
            <person name="Whithead S."/>
            <person name="Dupuy B."/>
            <person name="Dougan G."/>
            <person name="Barrell B."/>
            <person name="Parkhill J."/>
        </authorList>
    </citation>
    <scope>NUCLEOTIDE SEQUENCE [LARGE SCALE GENOMIC DNA]</scope>
    <source>
        <strain>630</strain>
    </source>
</reference>
<comment type="function">
    <text evidence="1">Catalyzes the attachment of alanine to tRNA(Ala) in a two-step reaction: alanine is first activated by ATP to form Ala-AMP and then transferred to the acceptor end of tRNA(Ala). Also edits incorrectly charged Ser-tRNA(Ala) and Gly-tRNA(Ala) via its editing domain.</text>
</comment>
<comment type="catalytic activity">
    <reaction evidence="1">
        <text>tRNA(Ala) + L-alanine + ATP = L-alanyl-tRNA(Ala) + AMP + diphosphate</text>
        <dbReference type="Rhea" id="RHEA:12540"/>
        <dbReference type="Rhea" id="RHEA-COMP:9657"/>
        <dbReference type="Rhea" id="RHEA-COMP:9923"/>
        <dbReference type="ChEBI" id="CHEBI:30616"/>
        <dbReference type="ChEBI" id="CHEBI:33019"/>
        <dbReference type="ChEBI" id="CHEBI:57972"/>
        <dbReference type="ChEBI" id="CHEBI:78442"/>
        <dbReference type="ChEBI" id="CHEBI:78497"/>
        <dbReference type="ChEBI" id="CHEBI:456215"/>
        <dbReference type="EC" id="6.1.1.7"/>
    </reaction>
</comment>
<comment type="cofactor">
    <cofactor evidence="1">
        <name>Zn(2+)</name>
        <dbReference type="ChEBI" id="CHEBI:29105"/>
    </cofactor>
    <text evidence="1">Binds 1 zinc ion per subunit.</text>
</comment>
<comment type="subcellular location">
    <subcellularLocation>
        <location evidence="1">Cytoplasm</location>
    </subcellularLocation>
</comment>
<comment type="domain">
    <text evidence="1">Consists of three domains; the N-terminal catalytic domain, the editing domain and the C-terminal C-Ala domain. The editing domain removes incorrectly charged amino acids, while the C-Ala domain, along with tRNA(Ala), serves as a bridge to cooperatively bring together the editing and aminoacylation centers thus stimulating deacylation of misacylated tRNAs.</text>
</comment>
<comment type="similarity">
    <text evidence="1">Belongs to the class-II aminoacyl-tRNA synthetase family.</text>
</comment>